<evidence type="ECO:0000250" key="1"/>
<evidence type="ECO:0000250" key="2">
    <source>
        <dbReference type="UniProtKB" id="P49419"/>
    </source>
</evidence>
<evidence type="ECO:0000250" key="3">
    <source>
        <dbReference type="UniProtKB" id="Q9DBF1"/>
    </source>
</evidence>
<evidence type="ECO:0000255" key="4"/>
<evidence type="ECO:0000255" key="5">
    <source>
        <dbReference type="PROSITE-ProRule" id="PRU10007"/>
    </source>
</evidence>
<evidence type="ECO:0000269" key="6">
    <source>
    </source>
</evidence>
<evidence type="ECO:0000269" key="7">
    <source>
    </source>
</evidence>
<evidence type="ECO:0000305" key="8"/>
<evidence type="ECO:0000312" key="9">
    <source>
        <dbReference type="RGD" id="1308614"/>
    </source>
</evidence>
<name>AL7A1_RAT</name>
<organism evidence="8">
    <name type="scientific">Rattus norvegicus</name>
    <name type="common">Rat</name>
    <dbReference type="NCBI Taxonomy" id="10116"/>
    <lineage>
        <taxon>Eukaryota</taxon>
        <taxon>Metazoa</taxon>
        <taxon>Chordata</taxon>
        <taxon>Craniata</taxon>
        <taxon>Vertebrata</taxon>
        <taxon>Euteleostomi</taxon>
        <taxon>Mammalia</taxon>
        <taxon>Eutheria</taxon>
        <taxon>Euarchontoglires</taxon>
        <taxon>Glires</taxon>
        <taxon>Rodentia</taxon>
        <taxon>Myomorpha</taxon>
        <taxon>Muroidea</taxon>
        <taxon>Muridae</taxon>
        <taxon>Murinae</taxon>
        <taxon>Rattus</taxon>
    </lineage>
</organism>
<dbReference type="EC" id="1.2.1.31" evidence="2"/>
<dbReference type="EC" id="1.2.1.3" evidence="2"/>
<dbReference type="EC" id="1.2.1.8" evidence="2"/>
<dbReference type="EMBL" id="AABR03109709">
    <property type="status" value="NOT_ANNOTATED_CDS"/>
    <property type="molecule type" value="Genomic_DNA"/>
</dbReference>
<dbReference type="EMBL" id="S75019">
    <property type="protein sequence ID" value="AAB31967.2"/>
    <property type="molecule type" value="mRNA"/>
</dbReference>
<dbReference type="PIR" id="B54676">
    <property type="entry name" value="B54676"/>
</dbReference>
<dbReference type="RefSeq" id="NP_001258034.1">
    <property type="nucleotide sequence ID" value="NM_001271105.1"/>
</dbReference>
<dbReference type="SMR" id="Q64057"/>
<dbReference type="BioGRID" id="253522">
    <property type="interactions" value="1"/>
</dbReference>
<dbReference type="FunCoup" id="Q64057">
    <property type="interactions" value="2039"/>
</dbReference>
<dbReference type="STRING" id="10116.ENSRNOP00000020325"/>
<dbReference type="iPTMnet" id="Q64057"/>
<dbReference type="PhosphoSitePlus" id="Q64057"/>
<dbReference type="jPOST" id="Q64057"/>
<dbReference type="PaxDb" id="10116-ENSRNOP00000020325"/>
<dbReference type="Ensembl" id="ENSRNOT00000020325.8">
    <property type="protein sequence ID" value="ENSRNOP00000020325.5"/>
    <property type="gene ID" value="ENSRNOG00000014645.8"/>
</dbReference>
<dbReference type="GeneID" id="291450"/>
<dbReference type="KEGG" id="rno:291450"/>
<dbReference type="UCSC" id="RGD:1308614">
    <property type="organism name" value="rat"/>
</dbReference>
<dbReference type="AGR" id="RGD:1308614"/>
<dbReference type="CTD" id="501"/>
<dbReference type="RGD" id="1308614">
    <property type="gene designation" value="Aldh7a1"/>
</dbReference>
<dbReference type="eggNOG" id="KOG2453">
    <property type="taxonomic scope" value="Eukaryota"/>
</dbReference>
<dbReference type="GeneTree" id="ENSGT00940000154938"/>
<dbReference type="HOGENOM" id="CLU_005391_1_2_1"/>
<dbReference type="InParanoid" id="Q64057"/>
<dbReference type="OrthoDB" id="19146at9989"/>
<dbReference type="PhylomeDB" id="Q64057"/>
<dbReference type="TreeFam" id="TF300388"/>
<dbReference type="Reactome" id="R-RNO-6798163">
    <property type="pathway name" value="Choline catabolism"/>
</dbReference>
<dbReference type="Reactome" id="R-RNO-71064">
    <property type="pathway name" value="Lysine catabolism"/>
</dbReference>
<dbReference type="UniPathway" id="UPA00529">
    <property type="reaction ID" value="UER00386"/>
</dbReference>
<dbReference type="PRO" id="PR:Q64057"/>
<dbReference type="Proteomes" id="UP000002494">
    <property type="component" value="Chromosome 18"/>
</dbReference>
<dbReference type="Bgee" id="ENSRNOG00000014645">
    <property type="expression patterns" value="Expressed in adult mammalian kidney and 19 other cell types or tissues"/>
</dbReference>
<dbReference type="GO" id="GO:0005829">
    <property type="term" value="C:cytosol"/>
    <property type="evidence" value="ECO:0000250"/>
    <property type="project" value="UniProtKB"/>
</dbReference>
<dbReference type="GO" id="GO:0005739">
    <property type="term" value="C:mitochondrion"/>
    <property type="evidence" value="ECO:0000250"/>
    <property type="project" value="UniProtKB"/>
</dbReference>
<dbReference type="GO" id="GO:0005634">
    <property type="term" value="C:nucleus"/>
    <property type="evidence" value="ECO:0007669"/>
    <property type="project" value="UniProtKB-SubCell"/>
</dbReference>
<dbReference type="GO" id="GO:0004029">
    <property type="term" value="F:aldehyde dehydrogenase (NAD+) activity"/>
    <property type="evidence" value="ECO:0000250"/>
    <property type="project" value="UniProtKB"/>
</dbReference>
<dbReference type="GO" id="GO:0008802">
    <property type="term" value="F:betaine-aldehyde dehydrogenase (NAD+) activity"/>
    <property type="evidence" value="ECO:0000250"/>
    <property type="project" value="UniProtKB"/>
</dbReference>
<dbReference type="GO" id="GO:0042802">
    <property type="term" value="F:identical protein binding"/>
    <property type="evidence" value="ECO:0000250"/>
    <property type="project" value="UniProtKB"/>
</dbReference>
<dbReference type="GO" id="GO:0004043">
    <property type="term" value="F:L-aminoadipate-semialdehyde dehydrogenase activity"/>
    <property type="evidence" value="ECO:0007669"/>
    <property type="project" value="UniProtKB-EC"/>
</dbReference>
<dbReference type="GO" id="GO:0019285">
    <property type="term" value="P:glycine betaine biosynthetic process from choline"/>
    <property type="evidence" value="ECO:0007669"/>
    <property type="project" value="UniProtKB-UniPathway"/>
</dbReference>
<dbReference type="CDD" id="cd07130">
    <property type="entry name" value="ALDH_F7_AASADH"/>
    <property type="match status" value="1"/>
</dbReference>
<dbReference type="FunFam" id="3.40.309.10:FF:000018">
    <property type="entry name" value="Alpha-aminoadipic semialdehyde dehydrogenase"/>
    <property type="match status" value="1"/>
</dbReference>
<dbReference type="FunFam" id="3.40.605.10:FF:000015">
    <property type="entry name" value="alpha-aminoadipic semialdehyde dehydrogenase"/>
    <property type="match status" value="1"/>
</dbReference>
<dbReference type="Gene3D" id="3.40.605.10">
    <property type="entry name" value="Aldehyde Dehydrogenase, Chain A, domain 1"/>
    <property type="match status" value="1"/>
</dbReference>
<dbReference type="Gene3D" id="3.40.309.10">
    <property type="entry name" value="Aldehyde Dehydrogenase, Chain A, domain 2"/>
    <property type="match status" value="1"/>
</dbReference>
<dbReference type="InterPro" id="IPR016161">
    <property type="entry name" value="Ald_DH/histidinol_DH"/>
</dbReference>
<dbReference type="InterPro" id="IPR016163">
    <property type="entry name" value="Ald_DH_C"/>
</dbReference>
<dbReference type="InterPro" id="IPR029510">
    <property type="entry name" value="Ald_DH_CS_GLU"/>
</dbReference>
<dbReference type="InterPro" id="IPR016162">
    <property type="entry name" value="Ald_DH_N"/>
</dbReference>
<dbReference type="InterPro" id="IPR015590">
    <property type="entry name" value="Aldehyde_DH_dom"/>
</dbReference>
<dbReference type="InterPro" id="IPR044638">
    <property type="entry name" value="ALDH7A1-like"/>
</dbReference>
<dbReference type="PANTHER" id="PTHR43521">
    <property type="entry name" value="ALPHA-AMINOADIPIC SEMIALDEHYDE DEHYDROGENASE"/>
    <property type="match status" value="1"/>
</dbReference>
<dbReference type="PANTHER" id="PTHR43521:SF1">
    <property type="entry name" value="ALPHA-AMINOADIPIC SEMIALDEHYDE DEHYDROGENASE"/>
    <property type="match status" value="1"/>
</dbReference>
<dbReference type="Pfam" id="PF00171">
    <property type="entry name" value="Aldedh"/>
    <property type="match status" value="1"/>
</dbReference>
<dbReference type="SUPFAM" id="SSF53720">
    <property type="entry name" value="ALDH-like"/>
    <property type="match status" value="1"/>
</dbReference>
<dbReference type="PROSITE" id="PS00687">
    <property type="entry name" value="ALDEHYDE_DEHYDR_GLU"/>
    <property type="match status" value="1"/>
</dbReference>
<accession>Q64057</accession>
<protein>
    <recommendedName>
        <fullName>Alpha-aminoadipic semialdehyde dehydrogenase</fullName>
        <shortName>Alpha-AASA dehydrogenase</shortName>
        <ecNumber evidence="2">1.2.1.31</ecNumber>
    </recommendedName>
    <alternativeName>
        <fullName>Aldehyde dehydrogenase family 7 member A1</fullName>
        <ecNumber evidence="2">1.2.1.3</ecNumber>
    </alternativeName>
    <alternativeName>
        <fullName>Antiquitin-1</fullName>
    </alternativeName>
    <alternativeName>
        <fullName>Betaine aldehyde dehydrogenase</fullName>
        <ecNumber evidence="2">1.2.1.8</ecNumber>
    </alternativeName>
    <alternativeName>
        <fullName>Delta1-piperideine-6-carboxylate dehydrogenase</fullName>
        <shortName>P6c dehydrogenase</shortName>
    </alternativeName>
</protein>
<feature type="transit peptide" description="Mitochondrion" evidence="4">
    <location>
        <begin position="1"/>
        <end position="26"/>
    </location>
</feature>
<feature type="chain" id="PRO_0000056492" description="Alpha-aminoadipic semialdehyde dehydrogenase">
    <location>
        <begin position="27"/>
        <end position="539"/>
    </location>
</feature>
<feature type="active site" description="Proton acceptor" evidence="5">
    <location>
        <position position="296"/>
    </location>
</feature>
<feature type="active site" description="Nucleophile" evidence="5">
    <location>
        <position position="330"/>
    </location>
</feature>
<feature type="binding site" evidence="2">
    <location>
        <begin position="192"/>
        <end position="194"/>
    </location>
    <ligand>
        <name>NAD(+)</name>
        <dbReference type="ChEBI" id="CHEBI:57540"/>
    </ligand>
</feature>
<feature type="binding site" evidence="2">
    <location>
        <position position="218"/>
    </location>
    <ligand>
        <name>NAD(+)</name>
        <dbReference type="ChEBI" id="CHEBI:57540"/>
    </ligand>
</feature>
<feature type="binding site" evidence="2">
    <location>
        <begin position="258"/>
        <end position="259"/>
    </location>
    <ligand>
        <name>NAD(+)</name>
        <dbReference type="ChEBI" id="CHEBI:57540"/>
    </ligand>
</feature>
<feature type="binding site" evidence="1">
    <location>
        <begin position="274"/>
        <end position="279"/>
    </location>
    <ligand>
        <name>NAD(+)</name>
        <dbReference type="ChEBI" id="CHEBI:57540"/>
    </ligand>
</feature>
<feature type="binding site" evidence="2">
    <location>
        <begin position="274"/>
        <end position="275"/>
    </location>
    <ligand>
        <name>NAD(+)</name>
        <dbReference type="ChEBI" id="CHEBI:57540"/>
    </ligand>
</feature>
<feature type="binding site" evidence="2">
    <location>
        <begin position="296"/>
        <end position="297"/>
    </location>
    <ligand>
        <name>NAD(+)</name>
        <dbReference type="ChEBI" id="CHEBI:57540"/>
    </ligand>
</feature>
<feature type="binding site" evidence="2">
    <location>
        <position position="331"/>
    </location>
    <ligand>
        <name>(S)-2-amino-6-oxohexanoate</name>
        <dbReference type="ChEBI" id="CHEBI:58321"/>
    </ligand>
</feature>
<feature type="binding site" evidence="2">
    <location>
        <position position="427"/>
    </location>
    <ligand>
        <name>NAD(+)</name>
        <dbReference type="ChEBI" id="CHEBI:57540"/>
    </ligand>
</feature>
<feature type="binding site" evidence="2">
    <location>
        <position position="489"/>
    </location>
    <ligand>
        <name>(S)-2-amino-6-oxohexanoate</name>
        <dbReference type="ChEBI" id="CHEBI:58321"/>
    </ligand>
</feature>
<feature type="binding site" evidence="2">
    <location>
        <position position="490"/>
    </location>
    <ligand>
        <name>(S)-2-amino-6-oxohexanoate</name>
        <dbReference type="ChEBI" id="CHEBI:58321"/>
    </ligand>
</feature>
<feature type="site" description="Transition state stabilizer" evidence="1">
    <location>
        <position position="195"/>
    </location>
</feature>
<feature type="modified residue" description="N6-acetyllysine; alternate" evidence="3">
    <location>
        <position position="86"/>
    </location>
</feature>
<feature type="modified residue" description="N6-succinyllysine; alternate" evidence="3">
    <location>
        <position position="86"/>
    </location>
</feature>
<feature type="modified residue" description="N6-acetyllysine; alternate" evidence="3">
    <location>
        <position position="94"/>
    </location>
</feature>
<feature type="modified residue" description="N6-succinyllysine; alternate" evidence="3">
    <location>
        <position position="94"/>
    </location>
</feature>
<feature type="modified residue" description="N6-acetyllysine; alternate" evidence="3">
    <location>
        <position position="97"/>
    </location>
</feature>
<feature type="modified residue" description="N6-succinyllysine; alternate" evidence="3">
    <location>
        <position position="97"/>
    </location>
</feature>
<feature type="modified residue" description="N6-acetyllysine" evidence="3">
    <location>
        <position position="462"/>
    </location>
</feature>
<feature type="modified residue" description="N6-acetyllysine" evidence="3">
    <location>
        <position position="500"/>
    </location>
</feature>
<feature type="modified residue" description="N6-succinyllysine" evidence="3">
    <location>
        <position position="537"/>
    </location>
</feature>
<comment type="function">
    <text evidence="2">Multifunctional enzyme mediating important protective effects. Metabolizes betaine aldehyde to betaine, an important cellular osmolyte and methyl donor. Protects cells from oxidative stress by metabolizing a number of lipid peroxidation-derived aldehydes. Involved in lysine catabolism.</text>
</comment>
<comment type="catalytic activity">
    <reaction evidence="2">
        <text>nonanal + NAD(+) + H2O = nonanoate + NADH + 2 H(+)</text>
        <dbReference type="Rhea" id="RHEA:69759"/>
        <dbReference type="ChEBI" id="CHEBI:15377"/>
        <dbReference type="ChEBI" id="CHEBI:15378"/>
        <dbReference type="ChEBI" id="CHEBI:32361"/>
        <dbReference type="ChEBI" id="CHEBI:57540"/>
        <dbReference type="ChEBI" id="CHEBI:57945"/>
        <dbReference type="ChEBI" id="CHEBI:84268"/>
    </reaction>
    <physiologicalReaction direction="left-to-right" evidence="2">
        <dbReference type="Rhea" id="RHEA:69760"/>
    </physiologicalReaction>
</comment>
<comment type="catalytic activity">
    <reaction evidence="2">
        <text>(S)-2-amino-6-oxohexanoate + NAD(+) + H2O = L-2-aminoadipate + NADH + 2 H(+)</text>
        <dbReference type="Rhea" id="RHEA:12308"/>
        <dbReference type="ChEBI" id="CHEBI:15377"/>
        <dbReference type="ChEBI" id="CHEBI:15378"/>
        <dbReference type="ChEBI" id="CHEBI:57540"/>
        <dbReference type="ChEBI" id="CHEBI:57945"/>
        <dbReference type="ChEBI" id="CHEBI:58321"/>
        <dbReference type="ChEBI" id="CHEBI:58672"/>
        <dbReference type="EC" id="1.2.1.31"/>
    </reaction>
    <physiologicalReaction direction="left-to-right" evidence="2">
        <dbReference type="Rhea" id="RHEA:12309"/>
    </physiologicalReaction>
</comment>
<comment type="catalytic activity">
    <reaction evidence="2">
        <text>betaine aldehyde + NAD(+) + H2O = glycine betaine + NADH + 2 H(+)</text>
        <dbReference type="Rhea" id="RHEA:15305"/>
        <dbReference type="ChEBI" id="CHEBI:15377"/>
        <dbReference type="ChEBI" id="CHEBI:15378"/>
        <dbReference type="ChEBI" id="CHEBI:15710"/>
        <dbReference type="ChEBI" id="CHEBI:17750"/>
        <dbReference type="ChEBI" id="CHEBI:57540"/>
        <dbReference type="ChEBI" id="CHEBI:57945"/>
        <dbReference type="EC" id="1.2.1.8"/>
    </reaction>
    <physiologicalReaction direction="left-to-right" evidence="2">
        <dbReference type="Rhea" id="RHEA:15306"/>
    </physiologicalReaction>
</comment>
<comment type="catalytic activity">
    <reaction evidence="2">
        <text>an aldehyde + NAD(+) + H2O = a carboxylate + NADH + 2 H(+)</text>
        <dbReference type="Rhea" id="RHEA:16185"/>
        <dbReference type="ChEBI" id="CHEBI:15377"/>
        <dbReference type="ChEBI" id="CHEBI:15378"/>
        <dbReference type="ChEBI" id="CHEBI:17478"/>
        <dbReference type="ChEBI" id="CHEBI:29067"/>
        <dbReference type="ChEBI" id="CHEBI:57540"/>
        <dbReference type="ChEBI" id="CHEBI:57945"/>
        <dbReference type="EC" id="1.2.1.3"/>
    </reaction>
    <physiologicalReaction direction="left-to-right" evidence="2">
        <dbReference type="Rhea" id="RHEA:16186"/>
    </physiologicalReaction>
</comment>
<comment type="catalytic activity">
    <reaction evidence="2">
        <text>hexanal + NAD(+) + H2O = hexanoate + NADH + 2 H(+)</text>
        <dbReference type="Rhea" id="RHEA:67276"/>
        <dbReference type="ChEBI" id="CHEBI:15377"/>
        <dbReference type="ChEBI" id="CHEBI:15378"/>
        <dbReference type="ChEBI" id="CHEBI:17120"/>
        <dbReference type="ChEBI" id="CHEBI:57540"/>
        <dbReference type="ChEBI" id="CHEBI:57945"/>
        <dbReference type="ChEBI" id="CHEBI:88528"/>
    </reaction>
    <physiologicalReaction direction="left-to-right" evidence="2">
        <dbReference type="Rhea" id="RHEA:67277"/>
    </physiologicalReaction>
</comment>
<comment type="catalytic activity">
    <reaction evidence="2">
        <text>octanal + NAD(+) + H2O = octanoate + NADH + 2 H(+)</text>
        <dbReference type="Rhea" id="RHEA:44100"/>
        <dbReference type="ChEBI" id="CHEBI:15377"/>
        <dbReference type="ChEBI" id="CHEBI:15378"/>
        <dbReference type="ChEBI" id="CHEBI:17935"/>
        <dbReference type="ChEBI" id="CHEBI:25646"/>
        <dbReference type="ChEBI" id="CHEBI:57540"/>
        <dbReference type="ChEBI" id="CHEBI:57945"/>
    </reaction>
    <physiologicalReaction direction="left-to-right" evidence="2">
        <dbReference type="Rhea" id="RHEA:44101"/>
    </physiologicalReaction>
</comment>
<comment type="catalytic activity">
    <reaction evidence="2">
        <text>(E)-non-2-enal + NAD(+) + H2O = (E)-non-2-enoate + NADH + 2 H(+)</text>
        <dbReference type="Rhea" id="RHEA:69767"/>
        <dbReference type="ChEBI" id="CHEBI:15377"/>
        <dbReference type="ChEBI" id="CHEBI:15378"/>
        <dbReference type="ChEBI" id="CHEBI:57540"/>
        <dbReference type="ChEBI" id="CHEBI:57945"/>
        <dbReference type="ChEBI" id="CHEBI:142592"/>
        <dbReference type="ChEBI" id="CHEBI:143908"/>
    </reaction>
    <physiologicalReaction direction="left-to-right" evidence="2">
        <dbReference type="Rhea" id="RHEA:69768"/>
    </physiologicalReaction>
</comment>
<comment type="catalytic activity">
    <reaction evidence="2">
        <text>(E)-4-hydroxynon-2-enal + NAD(+) + H2O = (E)-4-hydroxynon-2-enoate + NADH + 2 H(+)</text>
        <dbReference type="Rhea" id="RHEA:67248"/>
        <dbReference type="ChEBI" id="CHEBI:15377"/>
        <dbReference type="ChEBI" id="CHEBI:15378"/>
        <dbReference type="ChEBI" id="CHEBI:57540"/>
        <dbReference type="ChEBI" id="CHEBI:57945"/>
        <dbReference type="ChEBI" id="CHEBI:58968"/>
        <dbReference type="ChEBI" id="CHEBI:142920"/>
    </reaction>
    <physiologicalReaction direction="left-to-right" evidence="2">
        <dbReference type="Rhea" id="RHEA:67249"/>
    </physiologicalReaction>
</comment>
<comment type="pathway">
    <text evidence="2">Amine and polyamine biosynthesis; betaine biosynthesis via choline pathway; betaine from betaine aldehyde: step 1/1.</text>
</comment>
<comment type="subunit">
    <text evidence="2">Homotetramer.</text>
</comment>
<comment type="subcellular location">
    <subcellularLocation>
        <location evidence="2">Cytoplasm</location>
        <location evidence="2">Cytosol</location>
    </subcellularLocation>
    <subcellularLocation>
        <location evidence="2">Nucleus</location>
    </subcellularLocation>
    <subcellularLocation>
        <location evidence="2">Mitochondrion</location>
    </subcellularLocation>
</comment>
<comment type="tissue specificity">
    <text evidence="6 7">Abundant in kidney, liver, cochlea and outer hair cells but not inner hair cells or vestibular type I hair cells. Very low levels in lung, brain, intestine and pancreas.</text>
</comment>
<comment type="similarity">
    <text evidence="8">Belongs to the aldehyde dehydrogenase family.</text>
</comment>
<proteinExistence type="evidence at protein level"/>
<sequence length="539" mass="58749">MLRLARPLCVQTVKASKLSRLWSRPAALMSTLLIHHPQYAWLQDLGLREDNEGVFNGSWGGRGEVITTYCPANNEPIARVRQASMKDYEETIGKAKKAWNIWADIPAPKRGEIVRKIGDALREKIQLLGRLVSLEMGKILVEGIGEVQEYVDVCDYAAGLSRMIGGPTLPSERPGHALMEQWNPLGLVGIITAFNFPVAVFGWNNAIALITGNVCLWKGAPTTSLVSIAVTKIIAKVLEDNLLPGAICSLTCGGADMGTAMARDERVNLLSFTGSTQVGKQVALMVQERFGKSLLELGGNNAIIAFEDADLSLVLPSALFAAVGTAGQRCTTVRRLFLHESIHDEVVDRLKNAYSQIRVGNPWDPNILYGPLHTKQAVSMFVQAVEEAKKEGGTVVYGGKVMDHPGNYVEPTIVTGLVHDAPIVHKETFAPILYVFKFKNEEEVFEWNNEVKQGLSSSIFTKDLGRIFRWLGPKGSDCGIVNVNIPTSGAEIGGAFGGEKHTGGGRESGSDAWKQYMRRSTCTINYSTALPLAQGIKFQ</sequence>
<gene>
    <name evidence="9" type="primary">Aldh7a1</name>
    <name type="synonym">Ald7a1</name>
</gene>
<keyword id="KW-0007">Acetylation</keyword>
<keyword id="KW-0963">Cytoplasm</keyword>
<keyword id="KW-0903">Direct protein sequencing</keyword>
<keyword id="KW-0496">Mitochondrion</keyword>
<keyword id="KW-0520">NAD</keyword>
<keyword id="KW-0539">Nucleus</keyword>
<keyword id="KW-0560">Oxidoreductase</keyword>
<keyword id="KW-1185">Reference proteome</keyword>
<keyword id="KW-0809">Transit peptide</keyword>
<reference key="1">
    <citation type="journal article" date="2004" name="Nature">
        <title>Genome sequence of the Brown Norway rat yields insights into mammalian evolution.</title>
        <authorList>
            <person name="Gibbs R.A."/>
            <person name="Weinstock G.M."/>
            <person name="Metzker M.L."/>
            <person name="Muzny D.M."/>
            <person name="Sodergren E.J."/>
            <person name="Scherer S."/>
            <person name="Scott G."/>
            <person name="Steffen D."/>
            <person name="Worley K.C."/>
            <person name="Burch P.E."/>
            <person name="Okwuonu G."/>
            <person name="Hines S."/>
            <person name="Lewis L."/>
            <person name="Deramo C."/>
            <person name="Delgado O."/>
            <person name="Dugan-Rocha S."/>
            <person name="Miner G."/>
            <person name="Morgan M."/>
            <person name="Hawes A."/>
            <person name="Gill R."/>
            <person name="Holt R.A."/>
            <person name="Adams M.D."/>
            <person name="Amanatides P.G."/>
            <person name="Baden-Tillson H."/>
            <person name="Barnstead M."/>
            <person name="Chin S."/>
            <person name="Evans C.A."/>
            <person name="Ferriera S."/>
            <person name="Fosler C."/>
            <person name="Glodek A."/>
            <person name="Gu Z."/>
            <person name="Jennings D."/>
            <person name="Kraft C.L."/>
            <person name="Nguyen T."/>
            <person name="Pfannkoch C.M."/>
            <person name="Sitter C."/>
            <person name="Sutton G.G."/>
            <person name="Venter J.C."/>
            <person name="Woodage T."/>
            <person name="Smith D."/>
            <person name="Lee H.-M."/>
            <person name="Gustafson E."/>
            <person name="Cahill P."/>
            <person name="Kana A."/>
            <person name="Doucette-Stamm L."/>
            <person name="Weinstock K."/>
            <person name="Fechtel K."/>
            <person name="Weiss R.B."/>
            <person name="Dunn D.M."/>
            <person name="Green E.D."/>
            <person name="Blakesley R.W."/>
            <person name="Bouffard G.G."/>
            <person name="De Jong P.J."/>
            <person name="Osoegawa K."/>
            <person name="Zhu B."/>
            <person name="Marra M."/>
            <person name="Schein J."/>
            <person name="Bosdet I."/>
            <person name="Fjell C."/>
            <person name="Jones S."/>
            <person name="Krzywinski M."/>
            <person name="Mathewson C."/>
            <person name="Siddiqui A."/>
            <person name="Wye N."/>
            <person name="McPherson J."/>
            <person name="Zhao S."/>
            <person name="Fraser C.M."/>
            <person name="Shetty J."/>
            <person name="Shatsman S."/>
            <person name="Geer K."/>
            <person name="Chen Y."/>
            <person name="Abramzon S."/>
            <person name="Nierman W.C."/>
            <person name="Havlak P.H."/>
            <person name="Chen R."/>
            <person name="Durbin K.J."/>
            <person name="Egan A."/>
            <person name="Ren Y."/>
            <person name="Song X.-Z."/>
            <person name="Li B."/>
            <person name="Liu Y."/>
            <person name="Qin X."/>
            <person name="Cawley S."/>
            <person name="Cooney A.J."/>
            <person name="D'Souza L.M."/>
            <person name="Martin K."/>
            <person name="Wu J.Q."/>
            <person name="Gonzalez-Garay M.L."/>
            <person name="Jackson A.R."/>
            <person name="Kalafus K.J."/>
            <person name="McLeod M.P."/>
            <person name="Milosavljevic A."/>
            <person name="Virk D."/>
            <person name="Volkov A."/>
            <person name="Wheeler D.A."/>
            <person name="Zhang Z."/>
            <person name="Bailey J.A."/>
            <person name="Eichler E.E."/>
            <person name="Tuzun E."/>
            <person name="Birney E."/>
            <person name="Mongin E."/>
            <person name="Ureta-Vidal A."/>
            <person name="Woodwark C."/>
            <person name="Zdobnov E."/>
            <person name="Bork P."/>
            <person name="Suyama M."/>
            <person name="Torrents D."/>
            <person name="Alexandersson M."/>
            <person name="Trask B.J."/>
            <person name="Young J.M."/>
            <person name="Huang H."/>
            <person name="Wang H."/>
            <person name="Xing H."/>
            <person name="Daniels S."/>
            <person name="Gietzen D."/>
            <person name="Schmidt J."/>
            <person name="Stevens K."/>
            <person name="Vitt U."/>
            <person name="Wingrove J."/>
            <person name="Camara F."/>
            <person name="Mar Alba M."/>
            <person name="Abril J.F."/>
            <person name="Guigo R."/>
            <person name="Smit A."/>
            <person name="Dubchak I."/>
            <person name="Rubin E.M."/>
            <person name="Couronne O."/>
            <person name="Poliakov A."/>
            <person name="Huebner N."/>
            <person name="Ganten D."/>
            <person name="Goesele C."/>
            <person name="Hummel O."/>
            <person name="Kreitler T."/>
            <person name="Lee Y.-A."/>
            <person name="Monti J."/>
            <person name="Schulz H."/>
            <person name="Zimdahl H."/>
            <person name="Himmelbauer H."/>
            <person name="Lehrach H."/>
            <person name="Jacob H.J."/>
            <person name="Bromberg S."/>
            <person name="Gullings-Handley J."/>
            <person name="Jensen-Seaman M.I."/>
            <person name="Kwitek A.E."/>
            <person name="Lazar J."/>
            <person name="Pasko D."/>
            <person name="Tonellato P.J."/>
            <person name="Twigger S."/>
            <person name="Ponting C.P."/>
            <person name="Duarte J.M."/>
            <person name="Rice S."/>
            <person name="Goodstadt L."/>
            <person name="Beatson S.A."/>
            <person name="Emes R.D."/>
            <person name="Winter E.E."/>
            <person name="Webber C."/>
            <person name="Brandt P."/>
            <person name="Nyakatura G."/>
            <person name="Adetobi M."/>
            <person name="Chiaromonte F."/>
            <person name="Elnitski L."/>
            <person name="Eswara P."/>
            <person name="Hardison R.C."/>
            <person name="Hou M."/>
            <person name="Kolbe D."/>
            <person name="Makova K."/>
            <person name="Miller W."/>
            <person name="Nekrutenko A."/>
            <person name="Riemer C."/>
            <person name="Schwartz S."/>
            <person name="Taylor J."/>
            <person name="Yang S."/>
            <person name="Zhang Y."/>
            <person name="Lindpaintner K."/>
            <person name="Andrews T.D."/>
            <person name="Caccamo M."/>
            <person name="Clamp M."/>
            <person name="Clarke L."/>
            <person name="Curwen V."/>
            <person name="Durbin R.M."/>
            <person name="Eyras E."/>
            <person name="Searle S.M."/>
            <person name="Cooper G.M."/>
            <person name="Batzoglou S."/>
            <person name="Brudno M."/>
            <person name="Sidow A."/>
            <person name="Stone E.A."/>
            <person name="Payseur B.A."/>
            <person name="Bourque G."/>
            <person name="Lopez-Otin C."/>
            <person name="Puente X.S."/>
            <person name="Chakrabarti K."/>
            <person name="Chatterji S."/>
            <person name="Dewey C."/>
            <person name="Pachter L."/>
            <person name="Bray N."/>
            <person name="Yap V.B."/>
            <person name="Caspi A."/>
            <person name="Tesler G."/>
            <person name="Pevzner P.A."/>
            <person name="Haussler D."/>
            <person name="Roskin K.M."/>
            <person name="Baertsch R."/>
            <person name="Clawson H."/>
            <person name="Furey T.S."/>
            <person name="Hinrichs A.S."/>
            <person name="Karolchik D."/>
            <person name="Kent W.J."/>
            <person name="Rosenbloom K.R."/>
            <person name="Trumbower H."/>
            <person name="Weirauch M."/>
            <person name="Cooper D.N."/>
            <person name="Stenson P.D."/>
            <person name="Ma B."/>
            <person name="Brent M."/>
            <person name="Arumugam M."/>
            <person name="Shteynberg D."/>
            <person name="Copley R.R."/>
            <person name="Taylor M.S."/>
            <person name="Riethman H."/>
            <person name="Mudunuri U."/>
            <person name="Peterson J."/>
            <person name="Guyer M."/>
            <person name="Felsenfeld A."/>
            <person name="Old S."/>
            <person name="Mockrin S."/>
            <person name="Collins F.S."/>
        </authorList>
    </citation>
    <scope>NUCLEOTIDE SEQUENCE [LARGE SCALE GENOMIC DNA]</scope>
    <source>
        <strain>Brown Norway</strain>
    </source>
</reference>
<reference key="2">
    <citation type="submission" date="2006-11" db="UniProtKB">
        <authorList>
            <person name="Lubec G."/>
            <person name="Afjehi-Sadat L."/>
        </authorList>
    </citation>
    <scope>PROTEIN SEQUENCE OF 53-66 AND 144-154</scope>
    <scope>IDENTIFICATION BY MASS SPECTROMETRY</scope>
    <source>
        <strain>Sprague-Dawley</strain>
        <tissue>Spinal cord</tissue>
    </source>
</reference>
<reference evidence="8" key="3">
    <citation type="journal article" date="1994" name="Genomics">
        <title>Homology between a human protein and a protein of the green garden pea.</title>
        <authorList>
            <person name="Lee P."/>
            <person name="Kuhl W."/>
            <person name="Gelbart T."/>
            <person name="Kamimura T."/>
            <person name="West C."/>
            <person name="Beutler E."/>
        </authorList>
    </citation>
    <scope>NUCLEOTIDE SEQUENCE [MRNA] OF 312-539</scope>
    <scope>TISSUE SPECIFICITY</scope>
    <source>
        <tissue>Intestinal mucosa</tissue>
    </source>
</reference>
<reference evidence="8" key="4">
    <citation type="journal article" date="1997" name="Genomics">
        <title>An ancient conserved gene expressed in the human inner ear: identification, expression analysis, and chromosomal mapping of human and mouse antiquitin (ATQ1).</title>
        <authorList>
            <person name="Skvorak A.B."/>
            <person name="Robertson N.G."/>
            <person name="Yin Y."/>
            <person name="Weremowicz S."/>
            <person name="Her H."/>
            <person name="Bieber F.R."/>
            <person name="Beisel K.W."/>
            <person name="Lynch E.D."/>
            <person name="Beier D.R."/>
            <person name="Morton C.C."/>
        </authorList>
    </citation>
    <scope>TISSUE SPECIFICITY</scope>
</reference>